<accession>P67783</accession>
<accession>P24977</accession>
<sequence>MTPVHFSFSSAFILGLMGLAFHRTHLLSALLCLEGMMLSLFIALALWALQFESTGFSTAPMLLLAFSACEASTGLALLVATARTHGTDRLQNLNLLQC</sequence>
<gene>
    <name type="primary">MT-ND4L</name>
    <name type="synonym">MTND4L</name>
    <name type="synonym">NADH4L</name>
    <name type="synonym">ND4L</name>
</gene>
<feature type="chain" id="PRO_0000118404" description="NADH-ubiquinone oxidoreductase chain 4L">
    <location>
        <begin position="1"/>
        <end position="98"/>
    </location>
</feature>
<feature type="transmembrane region" description="Helical" evidence="3">
    <location>
        <begin position="1"/>
        <end position="21"/>
    </location>
</feature>
<feature type="transmembrane region" description="Helical" evidence="3">
    <location>
        <begin position="29"/>
        <end position="49"/>
    </location>
</feature>
<feature type="transmembrane region" description="Helical" evidence="3">
    <location>
        <begin position="59"/>
        <end position="79"/>
    </location>
</feature>
<dbReference type="EC" id="7.1.1.2"/>
<dbReference type="EMBL" id="AB006953">
    <property type="protein sequence ID" value="BAA31246.1"/>
    <property type="molecule type" value="Genomic_DNA"/>
</dbReference>
<dbReference type="EMBL" id="AB045144">
    <property type="protein sequence ID" value="BAB40356.1"/>
    <property type="molecule type" value="Genomic_DNA"/>
</dbReference>
<dbReference type="RefSeq" id="NP_008596.1">
    <property type="nucleotide sequence ID" value="NC_002079.1"/>
</dbReference>
<dbReference type="SMR" id="P67783"/>
<dbReference type="GeneID" id="808426"/>
<dbReference type="CTD" id="4539"/>
<dbReference type="OrthoDB" id="6146597at2759"/>
<dbReference type="Proteomes" id="UP000515129">
    <property type="component" value="Mitochondrion MT"/>
</dbReference>
<dbReference type="GO" id="GO:0031966">
    <property type="term" value="C:mitochondrial membrane"/>
    <property type="evidence" value="ECO:0007669"/>
    <property type="project" value="UniProtKB-SubCell"/>
</dbReference>
<dbReference type="GO" id="GO:0045271">
    <property type="term" value="C:respiratory chain complex I"/>
    <property type="evidence" value="ECO:0000250"/>
    <property type="project" value="UniProtKB"/>
</dbReference>
<dbReference type="GO" id="GO:0008137">
    <property type="term" value="F:NADH dehydrogenase (ubiquinone) activity"/>
    <property type="evidence" value="ECO:0000250"/>
    <property type="project" value="UniProtKB"/>
</dbReference>
<dbReference type="GO" id="GO:0042773">
    <property type="term" value="P:ATP synthesis coupled electron transport"/>
    <property type="evidence" value="ECO:0007669"/>
    <property type="project" value="InterPro"/>
</dbReference>
<dbReference type="FunFam" id="1.10.287.3510:FF:000002">
    <property type="entry name" value="NADH-ubiquinone oxidoreductase chain 4L"/>
    <property type="match status" value="1"/>
</dbReference>
<dbReference type="Gene3D" id="1.10.287.3510">
    <property type="match status" value="1"/>
</dbReference>
<dbReference type="InterPro" id="IPR001133">
    <property type="entry name" value="NADH_UbQ_OxRdtase_chain4L/K"/>
</dbReference>
<dbReference type="InterPro" id="IPR039428">
    <property type="entry name" value="NUOK/Mnh_C1-like"/>
</dbReference>
<dbReference type="PANTHER" id="PTHR11434:SF0">
    <property type="entry name" value="NADH-UBIQUINONE OXIDOREDUCTASE CHAIN 4L"/>
    <property type="match status" value="1"/>
</dbReference>
<dbReference type="PANTHER" id="PTHR11434">
    <property type="entry name" value="NADH-UBIQUINONE OXIDOREDUCTASE SUBUNIT ND4L"/>
    <property type="match status" value="1"/>
</dbReference>
<dbReference type="Pfam" id="PF00420">
    <property type="entry name" value="Oxidored_q2"/>
    <property type="match status" value="1"/>
</dbReference>
<organism>
    <name type="scientific">Carassius auratus</name>
    <name type="common">Goldfish</name>
    <dbReference type="NCBI Taxonomy" id="7957"/>
    <lineage>
        <taxon>Eukaryota</taxon>
        <taxon>Metazoa</taxon>
        <taxon>Chordata</taxon>
        <taxon>Craniata</taxon>
        <taxon>Vertebrata</taxon>
        <taxon>Euteleostomi</taxon>
        <taxon>Actinopterygii</taxon>
        <taxon>Neopterygii</taxon>
        <taxon>Teleostei</taxon>
        <taxon>Ostariophysi</taxon>
        <taxon>Cypriniformes</taxon>
        <taxon>Cyprinidae</taxon>
        <taxon>Cyprininae</taxon>
        <taxon>Carassius</taxon>
    </lineage>
</organism>
<geneLocation type="mitochondrion"/>
<proteinExistence type="inferred from homology"/>
<evidence type="ECO:0000250" key="1"/>
<evidence type="ECO:0000250" key="2">
    <source>
        <dbReference type="UniProtKB" id="P03901"/>
    </source>
</evidence>
<evidence type="ECO:0000255" key="3"/>
<evidence type="ECO:0000305" key="4"/>
<reference key="1">
    <citation type="journal article" date="1998" name="Zool. Sci.">
        <title>The complete sequence of mitochondrial genome from a gynogenetic triploid 'ginbuna' (Carassius auratus langsdorfi).</title>
        <authorList>
            <person name="Murakami M."/>
            <person name="Yamashita Y."/>
            <person name="Fujitani H."/>
        </authorList>
    </citation>
    <scope>NUCLEOTIDE SEQUENCE [GENOMIC DNA]</scope>
    <source>
        <strain>AZ3 / Langsdorfi</strain>
        <tissue>Oocyte</tissue>
    </source>
</reference>
<reference key="2">
    <citation type="submission" date="2000-06" db="EMBL/GenBank/DDBJ databases">
        <title>Carassius auratus cuvieri mitochondrial DNA, complete sequence.</title>
        <authorList>
            <person name="Murakami M."/>
        </authorList>
    </citation>
    <scope>NUCLEOTIDE SEQUENCE [GENOMIC DNA]</scope>
    <source>
        <strain>Cuvieri</strain>
    </source>
</reference>
<protein>
    <recommendedName>
        <fullName>NADH-ubiquinone oxidoreductase chain 4L</fullName>
        <ecNumber>7.1.1.2</ecNumber>
    </recommendedName>
    <alternativeName>
        <fullName>NADH dehydrogenase subunit 4L</fullName>
    </alternativeName>
</protein>
<keyword id="KW-0249">Electron transport</keyword>
<keyword id="KW-0472">Membrane</keyword>
<keyword id="KW-0496">Mitochondrion</keyword>
<keyword id="KW-0520">NAD</keyword>
<keyword id="KW-1185">Reference proteome</keyword>
<keyword id="KW-0679">Respiratory chain</keyword>
<keyword id="KW-1278">Translocase</keyword>
<keyword id="KW-0812">Transmembrane</keyword>
<keyword id="KW-1133">Transmembrane helix</keyword>
<keyword id="KW-0813">Transport</keyword>
<keyword id="KW-0830">Ubiquinone</keyword>
<name>NU4LM_CARAU</name>
<comment type="function">
    <text evidence="2">Core subunit of the mitochondrial membrane respiratory chain NADH dehydrogenase (Complex I) which catalyzes electron transfer from NADH through the respiratory chain, using ubiquinone as an electron acceptor. Part of the enzyme membrane arm which is embedded in the lipid bilayer and involved in proton translocation.</text>
</comment>
<comment type="catalytic activity">
    <reaction evidence="2">
        <text>a ubiquinone + NADH + 5 H(+)(in) = a ubiquinol + NAD(+) + 4 H(+)(out)</text>
        <dbReference type="Rhea" id="RHEA:29091"/>
        <dbReference type="Rhea" id="RHEA-COMP:9565"/>
        <dbReference type="Rhea" id="RHEA-COMP:9566"/>
        <dbReference type="ChEBI" id="CHEBI:15378"/>
        <dbReference type="ChEBI" id="CHEBI:16389"/>
        <dbReference type="ChEBI" id="CHEBI:17976"/>
        <dbReference type="ChEBI" id="CHEBI:57540"/>
        <dbReference type="ChEBI" id="CHEBI:57945"/>
        <dbReference type="EC" id="7.1.1.2"/>
    </reaction>
    <physiologicalReaction direction="left-to-right" evidence="2">
        <dbReference type="Rhea" id="RHEA:29092"/>
    </physiologicalReaction>
</comment>
<comment type="subcellular location">
    <subcellularLocation>
        <location evidence="1">Mitochondrion membrane</location>
        <topology evidence="1">Multi-pass membrane protein</topology>
    </subcellularLocation>
</comment>
<comment type="similarity">
    <text evidence="4">Belongs to the complex I subunit 4L family.</text>
</comment>